<feature type="chain" id="PRO_0000192665" description="Sec-independent protein translocase protein TatB">
    <location>
        <begin position="1"/>
        <end position="141"/>
    </location>
</feature>
<feature type="transmembrane region" description="Helical" evidence="1">
    <location>
        <begin position="1"/>
        <end position="21"/>
    </location>
</feature>
<feature type="region of interest" description="Disordered" evidence="2">
    <location>
        <begin position="74"/>
        <end position="141"/>
    </location>
</feature>
<feature type="compositionally biased region" description="Pro residues" evidence="2">
    <location>
        <begin position="89"/>
        <end position="115"/>
    </location>
</feature>
<feature type="compositionally biased region" description="Low complexity" evidence="2">
    <location>
        <begin position="116"/>
        <end position="129"/>
    </location>
</feature>
<feature type="compositionally biased region" description="Pro residues" evidence="2">
    <location>
        <begin position="130"/>
        <end position="141"/>
    </location>
</feature>
<name>TATB_PSEAE</name>
<keyword id="KW-0997">Cell inner membrane</keyword>
<keyword id="KW-1003">Cell membrane</keyword>
<keyword id="KW-0472">Membrane</keyword>
<keyword id="KW-0653">Protein transport</keyword>
<keyword id="KW-1185">Reference proteome</keyword>
<keyword id="KW-0811">Translocation</keyword>
<keyword id="KW-0812">Transmembrane</keyword>
<keyword id="KW-1133">Transmembrane helix</keyword>
<keyword id="KW-0813">Transport</keyword>
<organism>
    <name type="scientific">Pseudomonas aeruginosa (strain ATCC 15692 / DSM 22644 / CIP 104116 / JCM 14847 / LMG 12228 / 1C / PRS 101 / PAO1)</name>
    <dbReference type="NCBI Taxonomy" id="208964"/>
    <lineage>
        <taxon>Bacteria</taxon>
        <taxon>Pseudomonadati</taxon>
        <taxon>Pseudomonadota</taxon>
        <taxon>Gammaproteobacteria</taxon>
        <taxon>Pseudomonadales</taxon>
        <taxon>Pseudomonadaceae</taxon>
        <taxon>Pseudomonas</taxon>
    </lineage>
</organism>
<evidence type="ECO:0000255" key="1">
    <source>
        <dbReference type="HAMAP-Rule" id="MF_00237"/>
    </source>
</evidence>
<evidence type="ECO:0000256" key="2">
    <source>
        <dbReference type="SAM" id="MobiDB-lite"/>
    </source>
</evidence>
<dbReference type="EMBL" id="AE004091">
    <property type="protein sequence ID" value="AAG08454.1"/>
    <property type="molecule type" value="Genomic_DNA"/>
</dbReference>
<dbReference type="PIR" id="H83011">
    <property type="entry name" value="H83011"/>
</dbReference>
<dbReference type="RefSeq" id="NP_253756.1">
    <property type="nucleotide sequence ID" value="NC_002516.2"/>
</dbReference>
<dbReference type="RefSeq" id="WP_003115042.1">
    <property type="nucleotide sequence ID" value="NZ_QZGE01000002.1"/>
</dbReference>
<dbReference type="SMR" id="Q9HUB4"/>
<dbReference type="STRING" id="208964.PA5069"/>
<dbReference type="PaxDb" id="208964-PA5069"/>
<dbReference type="DNASU" id="879670"/>
<dbReference type="GeneID" id="879670"/>
<dbReference type="KEGG" id="pae:PA5069"/>
<dbReference type="PATRIC" id="fig|208964.12.peg.5313"/>
<dbReference type="PseudoCAP" id="PA5069"/>
<dbReference type="HOGENOM" id="CLU_086034_1_1_6"/>
<dbReference type="InParanoid" id="Q9HUB4"/>
<dbReference type="OrthoDB" id="9816005at2"/>
<dbReference type="PhylomeDB" id="Q9HUB4"/>
<dbReference type="BioCyc" id="PAER208964:G1FZ6-5185-MONOMER"/>
<dbReference type="Proteomes" id="UP000002438">
    <property type="component" value="Chromosome"/>
</dbReference>
<dbReference type="GO" id="GO:0033281">
    <property type="term" value="C:TAT protein transport complex"/>
    <property type="evidence" value="ECO:0000315"/>
    <property type="project" value="PseudoCAP"/>
</dbReference>
<dbReference type="GO" id="GO:0008320">
    <property type="term" value="F:protein transmembrane transporter activity"/>
    <property type="evidence" value="ECO:0000315"/>
    <property type="project" value="PseudoCAP"/>
</dbReference>
<dbReference type="GO" id="GO:0043953">
    <property type="term" value="P:protein transport by the Tat complex"/>
    <property type="evidence" value="ECO:0007669"/>
    <property type="project" value="UniProtKB-UniRule"/>
</dbReference>
<dbReference type="Gene3D" id="1.20.5.3310">
    <property type="match status" value="1"/>
</dbReference>
<dbReference type="HAMAP" id="MF_00237">
    <property type="entry name" value="TatB"/>
    <property type="match status" value="1"/>
</dbReference>
<dbReference type="InterPro" id="IPR003369">
    <property type="entry name" value="TatA/B/E"/>
</dbReference>
<dbReference type="InterPro" id="IPR018448">
    <property type="entry name" value="TatB"/>
</dbReference>
<dbReference type="NCBIfam" id="TIGR01410">
    <property type="entry name" value="tatB"/>
    <property type="match status" value="1"/>
</dbReference>
<dbReference type="PANTHER" id="PTHR33162">
    <property type="entry name" value="SEC-INDEPENDENT PROTEIN TRANSLOCASE PROTEIN TATA, CHLOROPLASTIC"/>
    <property type="match status" value="1"/>
</dbReference>
<dbReference type="PANTHER" id="PTHR33162:SF1">
    <property type="entry name" value="SEC-INDEPENDENT PROTEIN TRANSLOCASE PROTEIN TATA, CHLOROPLASTIC"/>
    <property type="match status" value="1"/>
</dbReference>
<dbReference type="Pfam" id="PF02416">
    <property type="entry name" value="TatA_B_E"/>
    <property type="match status" value="1"/>
</dbReference>
<dbReference type="PRINTS" id="PR01506">
    <property type="entry name" value="TATBPROTEIN"/>
</dbReference>
<accession>Q9HUB4</accession>
<proteinExistence type="inferred from homology"/>
<sequence>MFGISFSELLLVGLVALLVLGPERLPGAARTAGLWIGRLKRSFNTIKQEVEREIGADEIRRQLHNEHILSMEREAQKLLAPLTGQNPPQETPPPAAESPAPSVPTPPPTSTPAVPPADAAAPPAVAASTPPSPPSETPRNP</sequence>
<protein>
    <recommendedName>
        <fullName evidence="1">Sec-independent protein translocase protein TatB</fullName>
    </recommendedName>
</protein>
<reference key="1">
    <citation type="journal article" date="2000" name="Nature">
        <title>Complete genome sequence of Pseudomonas aeruginosa PAO1, an opportunistic pathogen.</title>
        <authorList>
            <person name="Stover C.K."/>
            <person name="Pham X.-Q.T."/>
            <person name="Erwin A.L."/>
            <person name="Mizoguchi S.D."/>
            <person name="Warrener P."/>
            <person name="Hickey M.J."/>
            <person name="Brinkman F.S.L."/>
            <person name="Hufnagle W.O."/>
            <person name="Kowalik D.J."/>
            <person name="Lagrou M."/>
            <person name="Garber R.L."/>
            <person name="Goltry L."/>
            <person name="Tolentino E."/>
            <person name="Westbrock-Wadman S."/>
            <person name="Yuan Y."/>
            <person name="Brody L.L."/>
            <person name="Coulter S.N."/>
            <person name="Folger K.R."/>
            <person name="Kas A."/>
            <person name="Larbig K."/>
            <person name="Lim R.M."/>
            <person name="Smith K.A."/>
            <person name="Spencer D.H."/>
            <person name="Wong G.K.-S."/>
            <person name="Wu Z."/>
            <person name="Paulsen I.T."/>
            <person name="Reizer J."/>
            <person name="Saier M.H. Jr."/>
            <person name="Hancock R.E.W."/>
            <person name="Lory S."/>
            <person name="Olson M.V."/>
        </authorList>
    </citation>
    <scope>NUCLEOTIDE SEQUENCE [LARGE SCALE GENOMIC DNA]</scope>
    <source>
        <strain>ATCC 15692 / DSM 22644 / CIP 104116 / JCM 14847 / LMG 12228 / 1C / PRS 101 / PAO1</strain>
    </source>
</reference>
<comment type="function">
    <text evidence="1">Part of the twin-arginine translocation (Tat) system that transports large folded proteins containing a characteristic twin-arginine motif in their signal peptide across membranes. Together with TatC, TatB is part of a receptor directly interacting with Tat signal peptides. TatB may form an oligomeric binding site that transiently accommodates folded Tat precursor proteins before their translocation.</text>
</comment>
<comment type="subunit">
    <text evidence="1">The Tat system comprises two distinct complexes: a TatABC complex, containing multiple copies of TatA, TatB and TatC subunits, and a separate TatA complex, containing only TatA subunits. Substrates initially bind to the TatABC complex, which probably triggers association of the separate TatA complex to form the active translocon.</text>
</comment>
<comment type="subcellular location">
    <subcellularLocation>
        <location evidence="1">Cell inner membrane</location>
        <topology evidence="1">Single-pass membrane protein</topology>
    </subcellularLocation>
</comment>
<comment type="similarity">
    <text evidence="1">Belongs to the TatB family.</text>
</comment>
<gene>
    <name evidence="1" type="primary">tatB</name>
    <name type="ordered locus">PA5069</name>
</gene>